<keyword id="KW-0067">ATP-binding</keyword>
<keyword id="KW-0436">Ligase</keyword>
<keyword id="KW-0460">Magnesium</keyword>
<keyword id="KW-0479">Metal-binding</keyword>
<keyword id="KW-0547">Nucleotide-binding</keyword>
<keyword id="KW-1185">Reference proteome</keyword>
<keyword id="KW-0816">Tricarboxylic acid cycle</keyword>
<gene>
    <name evidence="1" type="primary">sucC</name>
    <name type="ordered locus">BLi01829</name>
    <name type="ordered locus">BL01285</name>
</gene>
<name>SUCC_BACLD</name>
<accession>Q65JP0</accession>
<accession>Q62V45</accession>
<dbReference type="EC" id="6.2.1.5" evidence="1"/>
<dbReference type="EMBL" id="CP000002">
    <property type="protein sequence ID" value="AAU23364.1"/>
    <property type="molecule type" value="Genomic_DNA"/>
</dbReference>
<dbReference type="EMBL" id="AE017333">
    <property type="protein sequence ID" value="AAU40724.1"/>
    <property type="molecule type" value="Genomic_DNA"/>
</dbReference>
<dbReference type="RefSeq" id="WP_003181739.1">
    <property type="nucleotide sequence ID" value="NC_006322.1"/>
</dbReference>
<dbReference type="SMR" id="Q65JP0"/>
<dbReference type="STRING" id="279010.BL01285"/>
<dbReference type="GeneID" id="92861578"/>
<dbReference type="KEGG" id="bld:BLi01829"/>
<dbReference type="KEGG" id="bli:BL01285"/>
<dbReference type="eggNOG" id="COG0045">
    <property type="taxonomic scope" value="Bacteria"/>
</dbReference>
<dbReference type="HOGENOM" id="CLU_037430_0_2_9"/>
<dbReference type="UniPathway" id="UPA00223">
    <property type="reaction ID" value="UER00999"/>
</dbReference>
<dbReference type="Proteomes" id="UP000000606">
    <property type="component" value="Chromosome"/>
</dbReference>
<dbReference type="GO" id="GO:0005829">
    <property type="term" value="C:cytosol"/>
    <property type="evidence" value="ECO:0007669"/>
    <property type="project" value="TreeGrafter"/>
</dbReference>
<dbReference type="GO" id="GO:0042709">
    <property type="term" value="C:succinate-CoA ligase complex"/>
    <property type="evidence" value="ECO:0007669"/>
    <property type="project" value="TreeGrafter"/>
</dbReference>
<dbReference type="GO" id="GO:0005524">
    <property type="term" value="F:ATP binding"/>
    <property type="evidence" value="ECO:0007669"/>
    <property type="project" value="UniProtKB-UniRule"/>
</dbReference>
<dbReference type="GO" id="GO:0000287">
    <property type="term" value="F:magnesium ion binding"/>
    <property type="evidence" value="ECO:0007669"/>
    <property type="project" value="UniProtKB-UniRule"/>
</dbReference>
<dbReference type="GO" id="GO:0004775">
    <property type="term" value="F:succinate-CoA ligase (ADP-forming) activity"/>
    <property type="evidence" value="ECO:0007669"/>
    <property type="project" value="UniProtKB-UniRule"/>
</dbReference>
<dbReference type="GO" id="GO:0004776">
    <property type="term" value="F:succinate-CoA ligase (GDP-forming) activity"/>
    <property type="evidence" value="ECO:0007669"/>
    <property type="project" value="RHEA"/>
</dbReference>
<dbReference type="GO" id="GO:0006104">
    <property type="term" value="P:succinyl-CoA metabolic process"/>
    <property type="evidence" value="ECO:0007669"/>
    <property type="project" value="TreeGrafter"/>
</dbReference>
<dbReference type="GO" id="GO:0006099">
    <property type="term" value="P:tricarboxylic acid cycle"/>
    <property type="evidence" value="ECO:0007669"/>
    <property type="project" value="UniProtKB-UniRule"/>
</dbReference>
<dbReference type="FunFam" id="3.30.1490.20:FF:000002">
    <property type="entry name" value="Succinate--CoA ligase [ADP-forming] subunit beta"/>
    <property type="match status" value="1"/>
</dbReference>
<dbReference type="FunFam" id="3.30.470.20:FF:000002">
    <property type="entry name" value="Succinate--CoA ligase [ADP-forming] subunit beta"/>
    <property type="match status" value="1"/>
</dbReference>
<dbReference type="FunFam" id="3.40.50.261:FF:000001">
    <property type="entry name" value="Succinate--CoA ligase [ADP-forming] subunit beta"/>
    <property type="match status" value="1"/>
</dbReference>
<dbReference type="Gene3D" id="3.30.1490.20">
    <property type="entry name" value="ATP-grasp fold, A domain"/>
    <property type="match status" value="1"/>
</dbReference>
<dbReference type="Gene3D" id="3.30.470.20">
    <property type="entry name" value="ATP-grasp fold, B domain"/>
    <property type="match status" value="1"/>
</dbReference>
<dbReference type="Gene3D" id="3.40.50.261">
    <property type="entry name" value="Succinyl-CoA synthetase domains"/>
    <property type="match status" value="1"/>
</dbReference>
<dbReference type="HAMAP" id="MF_00558">
    <property type="entry name" value="Succ_CoA_beta"/>
    <property type="match status" value="1"/>
</dbReference>
<dbReference type="InterPro" id="IPR011761">
    <property type="entry name" value="ATP-grasp"/>
</dbReference>
<dbReference type="InterPro" id="IPR013650">
    <property type="entry name" value="ATP-grasp_succ-CoA_synth-type"/>
</dbReference>
<dbReference type="InterPro" id="IPR013815">
    <property type="entry name" value="ATP_grasp_subdomain_1"/>
</dbReference>
<dbReference type="InterPro" id="IPR017866">
    <property type="entry name" value="Succ-CoA_synthase_bsu_CS"/>
</dbReference>
<dbReference type="InterPro" id="IPR005811">
    <property type="entry name" value="SUCC_ACL_C"/>
</dbReference>
<dbReference type="InterPro" id="IPR005809">
    <property type="entry name" value="Succ_CoA_ligase-like_bsu"/>
</dbReference>
<dbReference type="InterPro" id="IPR016102">
    <property type="entry name" value="Succinyl-CoA_synth-like"/>
</dbReference>
<dbReference type="NCBIfam" id="NF001913">
    <property type="entry name" value="PRK00696.1"/>
    <property type="match status" value="1"/>
</dbReference>
<dbReference type="NCBIfam" id="TIGR01016">
    <property type="entry name" value="sucCoAbeta"/>
    <property type="match status" value="1"/>
</dbReference>
<dbReference type="PANTHER" id="PTHR11815:SF10">
    <property type="entry name" value="SUCCINATE--COA LIGASE [GDP-FORMING] SUBUNIT BETA, MITOCHONDRIAL"/>
    <property type="match status" value="1"/>
</dbReference>
<dbReference type="PANTHER" id="PTHR11815">
    <property type="entry name" value="SUCCINYL-COA SYNTHETASE BETA CHAIN"/>
    <property type="match status" value="1"/>
</dbReference>
<dbReference type="Pfam" id="PF08442">
    <property type="entry name" value="ATP-grasp_2"/>
    <property type="match status" value="1"/>
</dbReference>
<dbReference type="Pfam" id="PF00549">
    <property type="entry name" value="Ligase_CoA"/>
    <property type="match status" value="1"/>
</dbReference>
<dbReference type="PIRSF" id="PIRSF001554">
    <property type="entry name" value="SucCS_beta"/>
    <property type="match status" value="1"/>
</dbReference>
<dbReference type="SUPFAM" id="SSF56059">
    <property type="entry name" value="Glutathione synthetase ATP-binding domain-like"/>
    <property type="match status" value="1"/>
</dbReference>
<dbReference type="SUPFAM" id="SSF52210">
    <property type="entry name" value="Succinyl-CoA synthetase domains"/>
    <property type="match status" value="1"/>
</dbReference>
<dbReference type="PROSITE" id="PS50975">
    <property type="entry name" value="ATP_GRASP"/>
    <property type="match status" value="1"/>
</dbReference>
<dbReference type="PROSITE" id="PS01217">
    <property type="entry name" value="SUCCINYL_COA_LIG_3"/>
    <property type="match status" value="1"/>
</dbReference>
<reference key="1">
    <citation type="journal article" date="2004" name="J. Mol. Microbiol. Biotechnol.">
        <title>The complete genome sequence of Bacillus licheniformis DSM13, an organism with great industrial potential.</title>
        <authorList>
            <person name="Veith B."/>
            <person name="Herzberg C."/>
            <person name="Steckel S."/>
            <person name="Feesche J."/>
            <person name="Maurer K.H."/>
            <person name="Ehrenreich P."/>
            <person name="Baeumer S."/>
            <person name="Henne A."/>
            <person name="Liesegang H."/>
            <person name="Merkl R."/>
            <person name="Ehrenreich A."/>
            <person name="Gottschalk G."/>
        </authorList>
    </citation>
    <scope>NUCLEOTIDE SEQUENCE [LARGE SCALE GENOMIC DNA]</scope>
    <source>
        <strain>ATCC 14580 / DSM 13 / JCM 2505 / CCUG 7422 / NBRC 12200 / NCIMB 9375 / NCTC 10341 / NRRL NRS-1264 / Gibson 46</strain>
    </source>
</reference>
<reference key="2">
    <citation type="journal article" date="2004" name="Genome Biol.">
        <title>Complete genome sequence of the industrial bacterium Bacillus licheniformis and comparisons with closely related Bacillus species.</title>
        <authorList>
            <person name="Rey M.W."/>
            <person name="Ramaiya P."/>
            <person name="Nelson B.A."/>
            <person name="Brody-Karpin S.D."/>
            <person name="Zaretsky E.J."/>
            <person name="Tang M."/>
            <person name="Lopez de Leon A."/>
            <person name="Xiang H."/>
            <person name="Gusti V."/>
            <person name="Clausen I.G."/>
            <person name="Olsen P.B."/>
            <person name="Rasmussen M.D."/>
            <person name="Andersen J.T."/>
            <person name="Joergensen P.L."/>
            <person name="Larsen T.S."/>
            <person name="Sorokin A."/>
            <person name="Bolotin A."/>
            <person name="Lapidus A."/>
            <person name="Galleron N."/>
            <person name="Ehrlich S.D."/>
            <person name="Berka R.M."/>
        </authorList>
    </citation>
    <scope>NUCLEOTIDE SEQUENCE [LARGE SCALE GENOMIC DNA]</scope>
    <source>
        <strain>ATCC 14580 / DSM 13 / JCM 2505 / CCUG 7422 / NBRC 12200 / NCIMB 9375 / NCTC 10341 / NRRL NRS-1264 / Gibson 46</strain>
    </source>
</reference>
<evidence type="ECO:0000255" key="1">
    <source>
        <dbReference type="HAMAP-Rule" id="MF_00558"/>
    </source>
</evidence>
<comment type="function">
    <text evidence="1">Succinyl-CoA synthetase functions in the citric acid cycle (TCA), coupling the hydrolysis of succinyl-CoA to the synthesis of either ATP or GTP and thus represents the only step of substrate-level phosphorylation in the TCA. The beta subunit provides nucleotide specificity of the enzyme and binds the substrate succinate, while the binding sites for coenzyme A and phosphate are found in the alpha subunit.</text>
</comment>
<comment type="catalytic activity">
    <reaction evidence="1">
        <text>succinate + ATP + CoA = succinyl-CoA + ADP + phosphate</text>
        <dbReference type="Rhea" id="RHEA:17661"/>
        <dbReference type="ChEBI" id="CHEBI:30031"/>
        <dbReference type="ChEBI" id="CHEBI:30616"/>
        <dbReference type="ChEBI" id="CHEBI:43474"/>
        <dbReference type="ChEBI" id="CHEBI:57287"/>
        <dbReference type="ChEBI" id="CHEBI:57292"/>
        <dbReference type="ChEBI" id="CHEBI:456216"/>
        <dbReference type="EC" id="6.2.1.5"/>
    </reaction>
    <physiologicalReaction direction="right-to-left" evidence="1">
        <dbReference type="Rhea" id="RHEA:17663"/>
    </physiologicalReaction>
</comment>
<comment type="catalytic activity">
    <reaction evidence="1">
        <text>GTP + succinate + CoA = succinyl-CoA + GDP + phosphate</text>
        <dbReference type="Rhea" id="RHEA:22120"/>
        <dbReference type="ChEBI" id="CHEBI:30031"/>
        <dbReference type="ChEBI" id="CHEBI:37565"/>
        <dbReference type="ChEBI" id="CHEBI:43474"/>
        <dbReference type="ChEBI" id="CHEBI:57287"/>
        <dbReference type="ChEBI" id="CHEBI:57292"/>
        <dbReference type="ChEBI" id="CHEBI:58189"/>
    </reaction>
    <physiologicalReaction direction="right-to-left" evidence="1">
        <dbReference type="Rhea" id="RHEA:22122"/>
    </physiologicalReaction>
</comment>
<comment type="cofactor">
    <cofactor evidence="1">
        <name>Mg(2+)</name>
        <dbReference type="ChEBI" id="CHEBI:18420"/>
    </cofactor>
    <text evidence="1">Binds 1 Mg(2+) ion per subunit.</text>
</comment>
<comment type="pathway">
    <text evidence="1">Carbohydrate metabolism; tricarboxylic acid cycle; succinate from succinyl-CoA (ligase route): step 1/1.</text>
</comment>
<comment type="subunit">
    <text evidence="1">Heterotetramer of two alpha and two beta subunits.</text>
</comment>
<comment type="similarity">
    <text evidence="1">Belongs to the succinate/malate CoA ligase beta subunit family.</text>
</comment>
<feature type="chain" id="PRO_1000082014" description="Succinate--CoA ligase [ADP-forming] subunit beta">
    <location>
        <begin position="1"/>
        <end position="386"/>
    </location>
</feature>
<feature type="domain" description="ATP-grasp" evidence="1">
    <location>
        <begin position="9"/>
        <end position="244"/>
    </location>
</feature>
<feature type="binding site" evidence="1">
    <location>
        <position position="46"/>
    </location>
    <ligand>
        <name>ATP</name>
        <dbReference type="ChEBI" id="CHEBI:30616"/>
    </ligand>
</feature>
<feature type="binding site" evidence="1">
    <location>
        <begin position="53"/>
        <end position="55"/>
    </location>
    <ligand>
        <name>ATP</name>
        <dbReference type="ChEBI" id="CHEBI:30616"/>
    </ligand>
</feature>
<feature type="binding site" evidence="1">
    <location>
        <position position="99"/>
    </location>
    <ligand>
        <name>ATP</name>
        <dbReference type="ChEBI" id="CHEBI:30616"/>
    </ligand>
</feature>
<feature type="binding site" evidence="1">
    <location>
        <position position="102"/>
    </location>
    <ligand>
        <name>ATP</name>
        <dbReference type="ChEBI" id="CHEBI:30616"/>
    </ligand>
</feature>
<feature type="binding site" evidence="1">
    <location>
        <position position="107"/>
    </location>
    <ligand>
        <name>ATP</name>
        <dbReference type="ChEBI" id="CHEBI:30616"/>
    </ligand>
</feature>
<feature type="binding site" evidence="1">
    <location>
        <position position="199"/>
    </location>
    <ligand>
        <name>Mg(2+)</name>
        <dbReference type="ChEBI" id="CHEBI:18420"/>
    </ligand>
</feature>
<feature type="binding site" evidence="1">
    <location>
        <position position="213"/>
    </location>
    <ligand>
        <name>Mg(2+)</name>
        <dbReference type="ChEBI" id="CHEBI:18420"/>
    </ligand>
</feature>
<feature type="binding site" evidence="1">
    <location>
        <position position="264"/>
    </location>
    <ligand>
        <name>substrate</name>
        <note>ligand shared with subunit alpha</note>
    </ligand>
</feature>
<feature type="binding site" evidence="1">
    <location>
        <begin position="321"/>
        <end position="323"/>
    </location>
    <ligand>
        <name>substrate</name>
        <note>ligand shared with subunit alpha</note>
    </ligand>
</feature>
<protein>
    <recommendedName>
        <fullName evidence="1">Succinate--CoA ligase [ADP-forming] subunit beta</fullName>
        <ecNumber evidence="1">6.2.1.5</ecNumber>
    </recommendedName>
    <alternativeName>
        <fullName evidence="1">Succinyl-CoA synthetase subunit beta</fullName>
        <shortName evidence="1">SCS-beta</shortName>
    </alternativeName>
</protein>
<sequence length="386" mass="41570">MNIHEYQGKEVLRKYGVAVPEGKVAFTADEAVKAAEALSSSVYVVKAQIHAGGRGKAGGVKIAKSKEEVKAYAEELLGKTLVTHQTGPDGQQIKRLLIEEGCDIKKEYYVGLVLDRATSRIVLMASEEGGTEIEEVAEKTPEKIVKEVIDPAVGLQSYQARKIAFAINIPKELVGQAVKFMMGLYKAFTEKDCSIAEINPLVVTGDGKVMALDAKLNFDSNALYRQKDILEYRDLDEEDPKEIEASKYDLSYISLDGNIGCMVNGAGLAMSTMDIIKHYGGEPANFLDVGGGATAEKVTEAFKIILSDQNVKGIFVNIFGGIMKCDVIAEGVVEATKQVGLTLPLVVRLEGTNVDLGKKILDDSGLNITSAESMADGAQKIVSLVK</sequence>
<proteinExistence type="inferred from homology"/>
<organism>
    <name type="scientific">Bacillus licheniformis (strain ATCC 14580 / DSM 13 / JCM 2505 / CCUG 7422 / NBRC 12200 / NCIMB 9375 / NCTC 10341 / NRRL NRS-1264 / Gibson 46)</name>
    <dbReference type="NCBI Taxonomy" id="279010"/>
    <lineage>
        <taxon>Bacteria</taxon>
        <taxon>Bacillati</taxon>
        <taxon>Bacillota</taxon>
        <taxon>Bacilli</taxon>
        <taxon>Bacillales</taxon>
        <taxon>Bacillaceae</taxon>
        <taxon>Bacillus</taxon>
    </lineage>
</organism>